<reference key="1">
    <citation type="journal article" date="2004" name="Nat. Genet.">
        <title>Evidence in the Legionella pneumophila genome for exploitation of host cell functions and high genome plasticity.</title>
        <authorList>
            <person name="Cazalet C."/>
            <person name="Rusniok C."/>
            <person name="Brueggemann H."/>
            <person name="Zidane N."/>
            <person name="Magnier A."/>
            <person name="Ma L."/>
            <person name="Tichit M."/>
            <person name="Jarraud S."/>
            <person name="Bouchier C."/>
            <person name="Vandenesch F."/>
            <person name="Kunst F."/>
            <person name="Etienne J."/>
            <person name="Glaser P."/>
            <person name="Buchrieser C."/>
        </authorList>
    </citation>
    <scope>NUCLEOTIDE SEQUENCE [LARGE SCALE GENOMIC DNA]</scope>
    <source>
        <strain>Lens</strain>
    </source>
</reference>
<comment type="similarity">
    <text evidence="1">Belongs to the UPF0246 family.</text>
</comment>
<accession>Q5WWY2</accession>
<sequence length="257" mass="29653">MLTLLSPAKKLLSISKHYSKKTSNPLLLDKALELVKIMKLKSAEQIADLMDLSRQLAELNYERYQNFDLKNNPMNHSYPALFLFQGDVYQGLNANSWKDEEIEYAQSHLGILSGLYGFLRPLDRIQPYRLEMGVKLENPAGKNLYAFWSKIVTNILNQILAEQSNPVLINLASTEYFKVVDEKKLSYPLVTINFYEQKNSELKMIGILAKKARGMMAKYIMQNRIDSIEQIKEFSESGYLFNKEISSPNSLNFIRIH</sequence>
<proteinExistence type="inferred from homology"/>
<gene>
    <name type="ordered locus">lpl1317</name>
</gene>
<protein>
    <recommendedName>
        <fullName evidence="1">UPF0246 protein lpl1317</fullName>
    </recommendedName>
</protein>
<evidence type="ECO:0000255" key="1">
    <source>
        <dbReference type="HAMAP-Rule" id="MF_00652"/>
    </source>
</evidence>
<name>Y1317_LEGPL</name>
<dbReference type="EMBL" id="CR628337">
    <property type="protein sequence ID" value="CAH15557.1"/>
    <property type="molecule type" value="Genomic_DNA"/>
</dbReference>
<dbReference type="RefSeq" id="WP_011215388.1">
    <property type="nucleotide sequence ID" value="NC_006369.1"/>
</dbReference>
<dbReference type="SMR" id="Q5WWY2"/>
<dbReference type="KEGG" id="lpf:lpl1317"/>
<dbReference type="LegioList" id="lpl1317"/>
<dbReference type="HOGENOM" id="CLU_061989_0_0_6"/>
<dbReference type="Proteomes" id="UP000002517">
    <property type="component" value="Chromosome"/>
</dbReference>
<dbReference type="GO" id="GO:0005829">
    <property type="term" value="C:cytosol"/>
    <property type="evidence" value="ECO:0007669"/>
    <property type="project" value="TreeGrafter"/>
</dbReference>
<dbReference type="GO" id="GO:0033194">
    <property type="term" value="P:response to hydroperoxide"/>
    <property type="evidence" value="ECO:0007669"/>
    <property type="project" value="TreeGrafter"/>
</dbReference>
<dbReference type="HAMAP" id="MF_00652">
    <property type="entry name" value="UPF0246"/>
    <property type="match status" value="1"/>
</dbReference>
<dbReference type="InterPro" id="IPR005583">
    <property type="entry name" value="YaaA"/>
</dbReference>
<dbReference type="NCBIfam" id="NF002542">
    <property type="entry name" value="PRK02101.1-3"/>
    <property type="match status" value="1"/>
</dbReference>
<dbReference type="PANTHER" id="PTHR30283:SF4">
    <property type="entry name" value="PEROXIDE STRESS RESISTANCE PROTEIN YAAA"/>
    <property type="match status" value="1"/>
</dbReference>
<dbReference type="PANTHER" id="PTHR30283">
    <property type="entry name" value="PEROXIDE STRESS RESPONSE PROTEIN YAAA"/>
    <property type="match status" value="1"/>
</dbReference>
<dbReference type="Pfam" id="PF03883">
    <property type="entry name" value="H2O2_YaaD"/>
    <property type="match status" value="1"/>
</dbReference>
<feature type="chain" id="PRO_0000262030" description="UPF0246 protein lpl1317">
    <location>
        <begin position="1"/>
        <end position="257"/>
    </location>
</feature>
<organism>
    <name type="scientific">Legionella pneumophila (strain Lens)</name>
    <dbReference type="NCBI Taxonomy" id="297245"/>
    <lineage>
        <taxon>Bacteria</taxon>
        <taxon>Pseudomonadati</taxon>
        <taxon>Pseudomonadota</taxon>
        <taxon>Gammaproteobacteria</taxon>
        <taxon>Legionellales</taxon>
        <taxon>Legionellaceae</taxon>
        <taxon>Legionella</taxon>
    </lineage>
</organism>